<accession>C4B4E4</accession>
<organism>
    <name type="scientific">Glomerella lagenarium</name>
    <name type="common">Anthracnose fungus</name>
    <name type="synonym">Colletotrichum lagenarium</name>
    <dbReference type="NCBI Taxonomy" id="5462"/>
    <lineage>
        <taxon>Eukaryota</taxon>
        <taxon>Fungi</taxon>
        <taxon>Dikarya</taxon>
        <taxon>Ascomycota</taxon>
        <taxon>Pezizomycotina</taxon>
        <taxon>Sordariomycetes</taxon>
        <taxon>Hypocreomycetidae</taxon>
        <taxon>Glomerellales</taxon>
        <taxon>Glomerellaceae</taxon>
        <taxon>Colletotrichum</taxon>
    </lineage>
</organism>
<sequence length="121" mass="14041">MRSKFKDEHPFEKRKAEAERIRQKYSDRIPVICEKVEKSDIATIDKKKYLVPADLTVGQFVYVIRKRIKLSPEKAIFIFVDEVLPPTAALMSSIYEEHKDEDGFLYITYSGENTFGGFETA</sequence>
<reference key="1">
    <citation type="journal article" date="2009" name="Plant Cell">
        <title>Atg26-mediated pexophagy is required for host invasion by the plant pathogenic fungus Colletotrichum orbiculare.</title>
        <authorList>
            <person name="Asakura M."/>
            <person name="Ninomiya S."/>
            <person name="Sugimoto M."/>
            <person name="Oku M."/>
            <person name="Yamashita S."/>
            <person name="Okuno T."/>
            <person name="Sakai Y."/>
            <person name="Takano Y."/>
        </authorList>
    </citation>
    <scope>NUCLEOTIDE SEQUENCE [GENOMIC DNA]</scope>
    <scope>FUNCTION</scope>
    <scope>DISRUPTION PHENOTYPE</scope>
    <scope>SUBCELLULAR LOCATION</scope>
</reference>
<evidence type="ECO:0000250" key="1">
    <source>
        <dbReference type="UniProtKB" id="P38182"/>
    </source>
</evidence>
<evidence type="ECO:0000269" key="2">
    <source>
    </source>
</evidence>
<evidence type="ECO:0000303" key="3">
    <source>
    </source>
</evidence>
<evidence type="ECO:0000305" key="4"/>
<feature type="chain" id="PRO_0000443895" description="Autophagy-related protein 8">
    <location>
        <begin position="1"/>
        <end position="121"/>
    </location>
</feature>
<feature type="propeptide" id="PRO_0000443896" description="Removed in mature form" evidence="1">
    <location>
        <begin position="117"/>
        <end position="121"/>
    </location>
</feature>
<feature type="site" description="Cleavage; by ATG4" evidence="1">
    <location>
        <begin position="116"/>
        <end position="117"/>
    </location>
</feature>
<feature type="lipid moiety-binding region" description="Phosphatidylethanolamine amidated glycine" evidence="1">
    <location>
        <position position="116"/>
    </location>
</feature>
<gene>
    <name evidence="3" type="primary">ATG8</name>
</gene>
<comment type="function">
    <text evidence="1 2">Ubiquitin-like modifier involved in cytoplasm to vacuole transport (Cvt) vesicles and autophagosome formation (PubMed:19363139). With ATG4, mediates the delivery of the vesicles and autophagosomes to the vacuole via the microtubule cytoskeleton (By similarity). Required for selective autophagic degradation of the nucleus (nucleophagy) as well as for mitophagy which contributes to regulate mitochondrial quantity and quality by eliminating the mitochondria to a basal level to fulfill cellular energy requirements and preventing excess ROS production (By similarity). Also participates in membrane fusion events that take place in the early secretory pathway (By similarity). Also involved in endoplasmic reticulum-specific autophagic process and is essential for the survival of cells subjected to severe ER stress (By similarity). The ATG8-PE conjugate mediates tethering between adjacent membranes and stimulates membrane hemifusion, leading to expansion of the autophagosomal membrane during autophagy (By similarity). Moreover not only conjugation, but also subsequent ATG8-PE deconjugation is an important step required to facilitate multiple events during macroautophagy, and especially for efficient autophagosome biogenesis, the assembly of ATG9-containing tubulovesicular clusters into phagophores/autophagosomes, and for the disassembly of PAS-associated ATG components (By similarity). Contributes to normal formation of appressoria in the earlier steps of morphogenesis and to pathogenicity (PubMed:19363139).</text>
</comment>
<comment type="subunit">
    <text evidence="1">Conjugation to phosphatidylethanolamine (PE) leads to homodimerization (By similarity). Interacts with ATG1, ATG3, ATG4, ATG7 and ATG12 (By similarity).</text>
</comment>
<comment type="subcellular location">
    <subcellularLocation>
        <location evidence="1">Cytoplasmic vesicle</location>
        <location evidence="1">Cvt vesicle membrane</location>
        <topology evidence="1">Lipid-anchor</topology>
    </subcellularLocation>
    <subcellularLocation>
        <location evidence="2">Cytoplasmic vesicle</location>
        <location evidence="2">Autophagosome membrane</location>
        <topology evidence="1">Lipid-anchor</topology>
    </subcellularLocation>
    <subcellularLocation>
        <location evidence="2">Vacuole membrane</location>
        <topology evidence="1">Lipid-anchor</topology>
    </subcellularLocation>
    <text evidence="1">Membrane-associated through a lipid anchor (By similarity). This association needs the 2 ubiquitin-like systems required for cytoplasm to vacuole transport and autophagy (By similarity). Localizes to both the isolation membrane (IM) and the vacuole-isolation membrane contact site (VICS) during IM expansion (By similarity). The IM is a membrane sac generated from the pre-autophagosomal structure that ultimately expands to become a mature autophagosome (By similarity).</text>
</comment>
<comment type="PTM">
    <text evidence="1">The C-terminal 5 residues of ATG8 are removed by ATG4 to expose Gly-116 at the C-terminus (By similarity). This Gly-116 forms then a thioester bond with ATG7 (E1-like activating enzyme) before being transferred to ATG3 (the specific E2 conjugating enzyme), in order to be finally amidated with phosphatidylethanolamine (By similarity). This lipid modification anchors ATG8 to membranes and can be reversed by ATG4, releasing soluble ATG8 (By similarity).</text>
</comment>
<comment type="disruption phenotype">
    <text evidence="2">Exhibits slightly reduced growth on nutrient-rich medium, and displays a severe reduction in conidiation (PubMed:19363139). Leads to the loss of pathogenicity on cucumber cotyledons (PubMed:19363139). Is defective in the early stages of infection-related morphogenesis, such as in germination (PubMed:19363139).</text>
</comment>
<comment type="similarity">
    <text evidence="4">Belongs to the ATG8 family.</text>
</comment>
<name>ATG8_GLOLA</name>
<keyword id="KW-0072">Autophagy</keyword>
<keyword id="KW-0968">Cytoplasmic vesicle</keyword>
<keyword id="KW-0449">Lipoprotein</keyword>
<keyword id="KW-0472">Membrane</keyword>
<keyword id="KW-0653">Protein transport</keyword>
<keyword id="KW-0813">Transport</keyword>
<keyword id="KW-0926">Vacuole</keyword>
<proteinExistence type="inferred from homology"/>
<protein>
    <recommendedName>
        <fullName evidence="3">Autophagy-related protein 8</fullName>
    </recommendedName>
    <alternativeName>
        <fullName evidence="1">Autophagy-related ubiquitin-like modifier ATG8</fullName>
    </alternativeName>
</protein>
<dbReference type="EMBL" id="AB365480">
    <property type="protein sequence ID" value="BAH60888.1"/>
    <property type="molecule type" value="Genomic_DNA"/>
</dbReference>
<dbReference type="SMR" id="C4B4E4"/>
<dbReference type="GO" id="GO:0000421">
    <property type="term" value="C:autophagosome membrane"/>
    <property type="evidence" value="ECO:0007669"/>
    <property type="project" value="UniProtKB-SubCell"/>
</dbReference>
<dbReference type="GO" id="GO:0033110">
    <property type="term" value="C:Cvt vesicle membrane"/>
    <property type="evidence" value="ECO:0007669"/>
    <property type="project" value="UniProtKB-SubCell"/>
</dbReference>
<dbReference type="GO" id="GO:0006914">
    <property type="term" value="P:autophagy"/>
    <property type="evidence" value="ECO:0007669"/>
    <property type="project" value="UniProtKB-KW"/>
</dbReference>
<dbReference type="GO" id="GO:0015031">
    <property type="term" value="P:protein transport"/>
    <property type="evidence" value="ECO:0007669"/>
    <property type="project" value="UniProtKB-KW"/>
</dbReference>
<dbReference type="CDD" id="cd16128">
    <property type="entry name" value="Ubl_ATG8"/>
    <property type="match status" value="1"/>
</dbReference>
<dbReference type="FunFam" id="3.10.20.90:FF:000010">
    <property type="entry name" value="Autophagy-related protein"/>
    <property type="match status" value="1"/>
</dbReference>
<dbReference type="Gene3D" id="3.10.20.90">
    <property type="entry name" value="Phosphatidylinositol 3-kinase Catalytic Subunit, Chain A, domain 1"/>
    <property type="match status" value="1"/>
</dbReference>
<dbReference type="InterPro" id="IPR004241">
    <property type="entry name" value="Atg8-like"/>
</dbReference>
<dbReference type="InterPro" id="IPR029071">
    <property type="entry name" value="Ubiquitin-like_domsf"/>
</dbReference>
<dbReference type="PANTHER" id="PTHR10969">
    <property type="entry name" value="MICROTUBULE-ASSOCIATED PROTEINS 1A/1B LIGHT CHAIN 3-RELATED"/>
    <property type="match status" value="1"/>
</dbReference>
<dbReference type="Pfam" id="PF02991">
    <property type="entry name" value="ATG8"/>
    <property type="match status" value="1"/>
</dbReference>
<dbReference type="SUPFAM" id="SSF54236">
    <property type="entry name" value="Ubiquitin-like"/>
    <property type="match status" value="1"/>
</dbReference>